<accession>P57939</accession>
<dbReference type="EC" id="3.6.5.3" evidence="2"/>
<dbReference type="EMBL" id="AE004439">
    <property type="protein sequence ID" value="AAK03441.1"/>
    <property type="molecule type" value="Genomic_DNA"/>
</dbReference>
<dbReference type="SMR" id="P57939"/>
<dbReference type="STRING" id="272843.PM1357"/>
<dbReference type="EnsemblBacteria" id="AAK03441">
    <property type="protein sequence ID" value="AAK03441"/>
    <property type="gene ID" value="PM1357"/>
</dbReference>
<dbReference type="KEGG" id="pmu:PM1357"/>
<dbReference type="HOGENOM" id="CLU_007265_0_2_6"/>
<dbReference type="OrthoDB" id="9803139at2"/>
<dbReference type="Proteomes" id="UP000000809">
    <property type="component" value="Chromosome"/>
</dbReference>
<dbReference type="GO" id="GO:0005829">
    <property type="term" value="C:cytosol"/>
    <property type="evidence" value="ECO:0007669"/>
    <property type="project" value="TreeGrafter"/>
</dbReference>
<dbReference type="GO" id="GO:0005525">
    <property type="term" value="F:GTP binding"/>
    <property type="evidence" value="ECO:0007669"/>
    <property type="project" value="UniProtKB-UniRule"/>
</dbReference>
<dbReference type="GO" id="GO:0003924">
    <property type="term" value="F:GTPase activity"/>
    <property type="evidence" value="ECO:0007669"/>
    <property type="project" value="InterPro"/>
</dbReference>
<dbReference type="GO" id="GO:0097216">
    <property type="term" value="F:guanosine tetraphosphate binding"/>
    <property type="evidence" value="ECO:0007669"/>
    <property type="project" value="UniProtKB-ARBA"/>
</dbReference>
<dbReference type="GO" id="GO:0003746">
    <property type="term" value="F:translation elongation factor activity"/>
    <property type="evidence" value="ECO:0007669"/>
    <property type="project" value="UniProtKB-UniRule"/>
</dbReference>
<dbReference type="CDD" id="cd01884">
    <property type="entry name" value="EF_Tu"/>
    <property type="match status" value="1"/>
</dbReference>
<dbReference type="CDD" id="cd03697">
    <property type="entry name" value="EFTU_II"/>
    <property type="match status" value="1"/>
</dbReference>
<dbReference type="CDD" id="cd03707">
    <property type="entry name" value="EFTU_III"/>
    <property type="match status" value="1"/>
</dbReference>
<dbReference type="FunFam" id="2.40.30.10:FF:000001">
    <property type="entry name" value="Elongation factor Tu"/>
    <property type="match status" value="1"/>
</dbReference>
<dbReference type="FunFam" id="3.40.50.300:FF:000003">
    <property type="entry name" value="Elongation factor Tu"/>
    <property type="match status" value="1"/>
</dbReference>
<dbReference type="Gene3D" id="3.40.50.300">
    <property type="entry name" value="P-loop containing nucleotide triphosphate hydrolases"/>
    <property type="match status" value="1"/>
</dbReference>
<dbReference type="Gene3D" id="2.40.30.10">
    <property type="entry name" value="Translation factors"/>
    <property type="match status" value="2"/>
</dbReference>
<dbReference type="HAMAP" id="MF_00118_B">
    <property type="entry name" value="EF_Tu_B"/>
    <property type="match status" value="1"/>
</dbReference>
<dbReference type="InterPro" id="IPR041709">
    <property type="entry name" value="EF-Tu_GTP-bd"/>
</dbReference>
<dbReference type="InterPro" id="IPR050055">
    <property type="entry name" value="EF-Tu_GTPase"/>
</dbReference>
<dbReference type="InterPro" id="IPR004161">
    <property type="entry name" value="EFTu-like_2"/>
</dbReference>
<dbReference type="InterPro" id="IPR033720">
    <property type="entry name" value="EFTU_2"/>
</dbReference>
<dbReference type="InterPro" id="IPR031157">
    <property type="entry name" value="G_TR_CS"/>
</dbReference>
<dbReference type="InterPro" id="IPR027417">
    <property type="entry name" value="P-loop_NTPase"/>
</dbReference>
<dbReference type="InterPro" id="IPR005225">
    <property type="entry name" value="Small_GTP-bd"/>
</dbReference>
<dbReference type="InterPro" id="IPR000795">
    <property type="entry name" value="T_Tr_GTP-bd_dom"/>
</dbReference>
<dbReference type="InterPro" id="IPR009000">
    <property type="entry name" value="Transl_B-barrel_sf"/>
</dbReference>
<dbReference type="InterPro" id="IPR009001">
    <property type="entry name" value="Transl_elong_EF1A/Init_IF2_C"/>
</dbReference>
<dbReference type="InterPro" id="IPR004541">
    <property type="entry name" value="Transl_elong_EFTu/EF1A_bac/org"/>
</dbReference>
<dbReference type="InterPro" id="IPR004160">
    <property type="entry name" value="Transl_elong_EFTu/EF1A_C"/>
</dbReference>
<dbReference type="NCBIfam" id="TIGR00485">
    <property type="entry name" value="EF-Tu"/>
    <property type="match status" value="1"/>
</dbReference>
<dbReference type="NCBIfam" id="NF000766">
    <property type="entry name" value="PRK00049.1"/>
    <property type="match status" value="1"/>
</dbReference>
<dbReference type="NCBIfam" id="NF009372">
    <property type="entry name" value="PRK12735.1"/>
    <property type="match status" value="1"/>
</dbReference>
<dbReference type="NCBIfam" id="NF009373">
    <property type="entry name" value="PRK12736.1"/>
    <property type="match status" value="1"/>
</dbReference>
<dbReference type="NCBIfam" id="TIGR00231">
    <property type="entry name" value="small_GTP"/>
    <property type="match status" value="1"/>
</dbReference>
<dbReference type="PANTHER" id="PTHR43721:SF22">
    <property type="entry name" value="ELONGATION FACTOR TU, MITOCHONDRIAL"/>
    <property type="match status" value="1"/>
</dbReference>
<dbReference type="PANTHER" id="PTHR43721">
    <property type="entry name" value="ELONGATION FACTOR TU-RELATED"/>
    <property type="match status" value="1"/>
</dbReference>
<dbReference type="Pfam" id="PF00009">
    <property type="entry name" value="GTP_EFTU"/>
    <property type="match status" value="1"/>
</dbReference>
<dbReference type="Pfam" id="PF03144">
    <property type="entry name" value="GTP_EFTU_D2"/>
    <property type="match status" value="1"/>
</dbReference>
<dbReference type="Pfam" id="PF03143">
    <property type="entry name" value="GTP_EFTU_D3"/>
    <property type="match status" value="1"/>
</dbReference>
<dbReference type="PRINTS" id="PR00315">
    <property type="entry name" value="ELONGATNFCT"/>
</dbReference>
<dbReference type="SUPFAM" id="SSF50465">
    <property type="entry name" value="EF-Tu/eEF-1alpha/eIF2-gamma C-terminal domain"/>
    <property type="match status" value="1"/>
</dbReference>
<dbReference type="SUPFAM" id="SSF52540">
    <property type="entry name" value="P-loop containing nucleoside triphosphate hydrolases"/>
    <property type="match status" value="1"/>
</dbReference>
<dbReference type="SUPFAM" id="SSF50447">
    <property type="entry name" value="Translation proteins"/>
    <property type="match status" value="1"/>
</dbReference>
<dbReference type="PROSITE" id="PS00301">
    <property type="entry name" value="G_TR_1"/>
    <property type="match status" value="1"/>
</dbReference>
<dbReference type="PROSITE" id="PS51722">
    <property type="entry name" value="G_TR_2"/>
    <property type="match status" value="1"/>
</dbReference>
<feature type="chain" id="PRO_0000091359" description="Elongation factor Tu-A">
    <location>
        <begin position="1"/>
        <end position="394"/>
    </location>
</feature>
<feature type="domain" description="tr-type G">
    <location>
        <begin position="10"/>
        <end position="204"/>
    </location>
</feature>
<feature type="region of interest" description="G1" evidence="1">
    <location>
        <begin position="19"/>
        <end position="26"/>
    </location>
</feature>
<feature type="region of interest" description="G2" evidence="1">
    <location>
        <begin position="60"/>
        <end position="64"/>
    </location>
</feature>
<feature type="region of interest" description="G3" evidence="1">
    <location>
        <begin position="81"/>
        <end position="84"/>
    </location>
</feature>
<feature type="region of interest" description="G4" evidence="1">
    <location>
        <begin position="136"/>
        <end position="139"/>
    </location>
</feature>
<feature type="region of interest" description="G5" evidence="1">
    <location>
        <begin position="174"/>
        <end position="176"/>
    </location>
</feature>
<feature type="binding site" evidence="2">
    <location>
        <begin position="19"/>
        <end position="26"/>
    </location>
    <ligand>
        <name>GTP</name>
        <dbReference type="ChEBI" id="CHEBI:37565"/>
    </ligand>
</feature>
<feature type="binding site" evidence="2">
    <location>
        <position position="26"/>
    </location>
    <ligand>
        <name>Mg(2+)</name>
        <dbReference type="ChEBI" id="CHEBI:18420"/>
    </ligand>
</feature>
<feature type="binding site" evidence="2">
    <location>
        <begin position="81"/>
        <end position="85"/>
    </location>
    <ligand>
        <name>GTP</name>
        <dbReference type="ChEBI" id="CHEBI:37565"/>
    </ligand>
</feature>
<feature type="binding site" evidence="2">
    <location>
        <begin position="136"/>
        <end position="139"/>
    </location>
    <ligand>
        <name>GTP</name>
        <dbReference type="ChEBI" id="CHEBI:37565"/>
    </ligand>
</feature>
<keyword id="KW-0963">Cytoplasm</keyword>
<keyword id="KW-0251">Elongation factor</keyword>
<keyword id="KW-0342">GTP-binding</keyword>
<keyword id="KW-0378">Hydrolase</keyword>
<keyword id="KW-0460">Magnesium</keyword>
<keyword id="KW-0479">Metal-binding</keyword>
<keyword id="KW-0547">Nucleotide-binding</keyword>
<keyword id="KW-0648">Protein biosynthesis</keyword>
<keyword id="KW-1185">Reference proteome</keyword>
<name>EFTU1_PASMU</name>
<reference key="1">
    <citation type="journal article" date="2001" name="Proc. Natl. Acad. Sci. U.S.A.">
        <title>Complete genomic sequence of Pasteurella multocida Pm70.</title>
        <authorList>
            <person name="May B.J."/>
            <person name="Zhang Q."/>
            <person name="Li L.L."/>
            <person name="Paustian M.L."/>
            <person name="Whittam T.S."/>
            <person name="Kapur V."/>
        </authorList>
    </citation>
    <scope>NUCLEOTIDE SEQUENCE [LARGE SCALE GENOMIC DNA]</scope>
    <source>
        <strain>Pm70</strain>
    </source>
</reference>
<evidence type="ECO:0000250" key="1"/>
<evidence type="ECO:0000255" key="2">
    <source>
        <dbReference type="HAMAP-Rule" id="MF_00118"/>
    </source>
</evidence>
<proteinExistence type="inferred from homology"/>
<gene>
    <name evidence="2" type="primary">tufA</name>
    <name type="ordered locus">PM1357</name>
</gene>
<sequence>MSKEKFERTKPHVNVGTIGHVDHGKTTLTAAITTVLAKHYGGAARAFDQIDNAPEEKARGITINTSHVEYDTPTRHYAHVDCPGHADYVKNMITGAAQMDGAILVVAATDGPMPQTREHILLGRQVGVPYIIVFLNKCDMVDDEELLELVEMEVRELLSQYDFPGDDTPIVRGSALQALNGVAEWEEKILELANHLDTYIPEPQRAIDQPFLLPIEDVFSISGRGTVVTGRVERGIIRTGEEVEIVGIKATTKTTVTGVEMFRKLLDEGRAGENVGALLRGTKREEIERGQVLAKPGSITPHTDFESEVYVLSKEEGGRHTPFFKGYRPQFYFRTTDVTGTIELPEGVEMVMPGDNIKMTVSLIHPIAMDQGLRFAIREGGRTVGAGVVAKIIK</sequence>
<protein>
    <recommendedName>
        <fullName evidence="2">Elongation factor Tu-A</fullName>
        <shortName evidence="2">EF-Tu-A</shortName>
        <ecNumber evidence="2">3.6.5.3</ecNumber>
    </recommendedName>
</protein>
<comment type="function">
    <text evidence="2">GTP hydrolase that promotes the GTP-dependent binding of aminoacyl-tRNA to the A-site of ribosomes during protein biosynthesis.</text>
</comment>
<comment type="catalytic activity">
    <reaction evidence="2">
        <text>GTP + H2O = GDP + phosphate + H(+)</text>
        <dbReference type="Rhea" id="RHEA:19669"/>
        <dbReference type="ChEBI" id="CHEBI:15377"/>
        <dbReference type="ChEBI" id="CHEBI:15378"/>
        <dbReference type="ChEBI" id="CHEBI:37565"/>
        <dbReference type="ChEBI" id="CHEBI:43474"/>
        <dbReference type="ChEBI" id="CHEBI:58189"/>
        <dbReference type="EC" id="3.6.5.3"/>
    </reaction>
    <physiologicalReaction direction="left-to-right" evidence="2">
        <dbReference type="Rhea" id="RHEA:19670"/>
    </physiologicalReaction>
</comment>
<comment type="subunit">
    <text evidence="2">Monomer.</text>
</comment>
<comment type="subcellular location">
    <subcellularLocation>
        <location evidence="2">Cytoplasm</location>
    </subcellularLocation>
</comment>
<comment type="similarity">
    <text evidence="2">Belongs to the TRAFAC class translation factor GTPase superfamily. Classic translation factor GTPase family. EF-Tu/EF-1A subfamily.</text>
</comment>
<organism>
    <name type="scientific">Pasteurella multocida (strain Pm70)</name>
    <dbReference type="NCBI Taxonomy" id="272843"/>
    <lineage>
        <taxon>Bacteria</taxon>
        <taxon>Pseudomonadati</taxon>
        <taxon>Pseudomonadota</taxon>
        <taxon>Gammaproteobacteria</taxon>
        <taxon>Pasteurellales</taxon>
        <taxon>Pasteurellaceae</taxon>
        <taxon>Pasteurella</taxon>
    </lineage>
</organism>